<organism>
    <name type="scientific">Blochmanniella floridana</name>
    <dbReference type="NCBI Taxonomy" id="203907"/>
    <lineage>
        <taxon>Bacteria</taxon>
        <taxon>Pseudomonadati</taxon>
        <taxon>Pseudomonadota</taxon>
        <taxon>Gammaproteobacteria</taxon>
        <taxon>Enterobacterales</taxon>
        <taxon>Enterobacteriaceae</taxon>
        <taxon>ant endosymbionts</taxon>
        <taxon>Candidatus Blochmanniella</taxon>
    </lineage>
</organism>
<name>FTSQ_BLOFL</name>
<proteinExistence type="inferred from homology"/>
<evidence type="ECO:0000255" key="1">
    <source>
        <dbReference type="HAMAP-Rule" id="MF_00911"/>
    </source>
</evidence>
<evidence type="ECO:0000255" key="2">
    <source>
        <dbReference type="PROSITE-ProRule" id="PRU01115"/>
    </source>
</evidence>
<protein>
    <recommendedName>
        <fullName evidence="1">Cell division protein FtsQ</fullName>
    </recommendedName>
</protein>
<dbReference type="EMBL" id="BX248583">
    <property type="protein sequence ID" value="CAD83665.1"/>
    <property type="molecule type" value="Genomic_DNA"/>
</dbReference>
<dbReference type="SMR" id="Q7VQI6"/>
<dbReference type="STRING" id="203907.Bfl144"/>
<dbReference type="KEGG" id="bfl:Bfl144"/>
<dbReference type="eggNOG" id="COG1589">
    <property type="taxonomic scope" value="Bacteria"/>
</dbReference>
<dbReference type="HOGENOM" id="CLU_064041_2_1_6"/>
<dbReference type="OrthoDB" id="9790370at2"/>
<dbReference type="Proteomes" id="UP000002192">
    <property type="component" value="Chromosome"/>
</dbReference>
<dbReference type="GO" id="GO:0032153">
    <property type="term" value="C:cell division site"/>
    <property type="evidence" value="ECO:0007669"/>
    <property type="project" value="UniProtKB-UniRule"/>
</dbReference>
<dbReference type="GO" id="GO:0005886">
    <property type="term" value="C:plasma membrane"/>
    <property type="evidence" value="ECO:0007669"/>
    <property type="project" value="UniProtKB-SubCell"/>
</dbReference>
<dbReference type="GO" id="GO:0090529">
    <property type="term" value="P:cell septum assembly"/>
    <property type="evidence" value="ECO:0007669"/>
    <property type="project" value="InterPro"/>
</dbReference>
<dbReference type="GO" id="GO:0043093">
    <property type="term" value="P:FtsZ-dependent cytokinesis"/>
    <property type="evidence" value="ECO:0007669"/>
    <property type="project" value="UniProtKB-UniRule"/>
</dbReference>
<dbReference type="Gene3D" id="3.40.50.11690">
    <property type="entry name" value="Cell division protein FtsQ/DivIB"/>
    <property type="match status" value="1"/>
</dbReference>
<dbReference type="Gene3D" id="3.10.20.310">
    <property type="entry name" value="membrane protein fhac"/>
    <property type="match status" value="1"/>
</dbReference>
<dbReference type="HAMAP" id="MF_00911">
    <property type="entry name" value="FtsQ_subfam"/>
    <property type="match status" value="1"/>
</dbReference>
<dbReference type="InterPro" id="IPR005548">
    <property type="entry name" value="Cell_div_FtsQ/DivIB_C"/>
</dbReference>
<dbReference type="InterPro" id="IPR026579">
    <property type="entry name" value="FtsQ"/>
</dbReference>
<dbReference type="InterPro" id="IPR045335">
    <property type="entry name" value="FtsQ_C_sf"/>
</dbReference>
<dbReference type="InterPro" id="IPR034746">
    <property type="entry name" value="POTRA"/>
</dbReference>
<dbReference type="InterPro" id="IPR013685">
    <property type="entry name" value="POTRA_FtsQ_type"/>
</dbReference>
<dbReference type="PANTHER" id="PTHR35851">
    <property type="entry name" value="CELL DIVISION PROTEIN FTSQ"/>
    <property type="match status" value="1"/>
</dbReference>
<dbReference type="PANTHER" id="PTHR35851:SF1">
    <property type="entry name" value="CELL DIVISION PROTEIN FTSQ"/>
    <property type="match status" value="1"/>
</dbReference>
<dbReference type="Pfam" id="PF03799">
    <property type="entry name" value="FtsQ_DivIB_C"/>
    <property type="match status" value="1"/>
</dbReference>
<dbReference type="Pfam" id="PF08478">
    <property type="entry name" value="POTRA_1"/>
    <property type="match status" value="1"/>
</dbReference>
<dbReference type="PROSITE" id="PS51779">
    <property type="entry name" value="POTRA"/>
    <property type="match status" value="1"/>
</dbReference>
<comment type="function">
    <text evidence="1">Essential cell division protein. May link together the upstream cell division proteins, which are predominantly cytoplasmic, with the downstream cell division proteins, which are predominantly periplasmic. May control correct divisome assembly.</text>
</comment>
<comment type="subunit">
    <text evidence="1">Part of a complex composed of FtsB, FtsL and FtsQ.</text>
</comment>
<comment type="subcellular location">
    <subcellularLocation>
        <location evidence="1">Cell inner membrane</location>
        <topology evidence="1">Single-pass type II membrane protein</topology>
    </subcellularLocation>
    <text evidence="1">Localizes to the division septum.</text>
</comment>
<comment type="similarity">
    <text evidence="1">Belongs to the FtsQ/DivIB family. FtsQ subfamily.</text>
</comment>
<accession>Q7VQI6</accession>
<feature type="chain" id="PRO_0000414659" description="Cell division protein FtsQ">
    <location>
        <begin position="1"/>
        <end position="276"/>
    </location>
</feature>
<feature type="topological domain" description="Cytoplasmic" evidence="1">
    <location>
        <begin position="1"/>
        <end position="11"/>
    </location>
</feature>
<feature type="transmembrane region" description="Helical" evidence="1">
    <location>
        <begin position="12"/>
        <end position="32"/>
    </location>
</feature>
<feature type="topological domain" description="Periplasmic" evidence="1">
    <location>
        <begin position="33"/>
        <end position="276"/>
    </location>
</feature>
<feature type="domain" description="POTRA" evidence="2">
    <location>
        <begin position="45"/>
        <end position="115"/>
    </location>
</feature>
<sequence>MQYILKLKYYLYNITWKLVFICVMLVLLIVGIHKNIKWVCDYYSGPLSYIIVTGNRFFTTNDDINYIILKSGVLGTFITQDVNIIQKQIKQMPWIQKVSVRKQWPNTLKINLIEYIPIAYWNNEFISTTGVVFSVSECLYNEYSSFVRKMYQEIPILYGPTGKDQEVLNNYLRFSAILKSSNFQIKSVKTDTCYTWQLVLDNNVCLKLGCVNLIERLHYFIKVYPFLVKEMDEKNKYIDYVDLRYNSGCSVRWIHNMIDPVFHAINNVSKGSHDYD</sequence>
<gene>
    <name evidence="1" type="primary">ftsQ</name>
    <name type="ordered locus">Bfl144</name>
</gene>
<keyword id="KW-0131">Cell cycle</keyword>
<keyword id="KW-0132">Cell division</keyword>
<keyword id="KW-0997">Cell inner membrane</keyword>
<keyword id="KW-1003">Cell membrane</keyword>
<keyword id="KW-0472">Membrane</keyword>
<keyword id="KW-1185">Reference proteome</keyword>
<keyword id="KW-0812">Transmembrane</keyword>
<keyword id="KW-1133">Transmembrane helix</keyword>
<reference key="1">
    <citation type="journal article" date="2003" name="Proc. Natl. Acad. Sci. U.S.A.">
        <title>The genome sequence of Blochmannia floridanus: comparative analysis of reduced genomes.</title>
        <authorList>
            <person name="Gil R."/>
            <person name="Silva F.J."/>
            <person name="Zientz E."/>
            <person name="Delmotte F."/>
            <person name="Gonzalez-Candelas F."/>
            <person name="Latorre A."/>
            <person name="Rausell C."/>
            <person name="Kamerbeek J."/>
            <person name="Gadau J."/>
            <person name="Hoelldobler B."/>
            <person name="van Ham R.C.H.J."/>
            <person name="Gross R."/>
            <person name="Moya A."/>
        </authorList>
    </citation>
    <scope>NUCLEOTIDE SEQUENCE [LARGE SCALE GENOMIC DNA]</scope>
</reference>